<keyword id="KW-0106">Calcium</keyword>
<keyword id="KW-0119">Carbohydrate metabolism</keyword>
<keyword id="KW-0868">Chloride</keyword>
<keyword id="KW-1015">Disulfide bond</keyword>
<keyword id="KW-0326">Glycosidase</keyword>
<keyword id="KW-0378">Hydrolase</keyword>
<keyword id="KW-0479">Metal-binding</keyword>
<keyword id="KW-0873">Pyrrolidone carboxylic acid</keyword>
<keyword id="KW-0964">Secreted</keyword>
<keyword id="KW-0732">Signal</keyword>
<evidence type="ECO:0000250" key="1"/>
<evidence type="ECO:0000250" key="2">
    <source>
        <dbReference type="UniProtKB" id="P04746"/>
    </source>
</evidence>
<evidence type="ECO:0000250" key="3">
    <source>
        <dbReference type="UniProtKB" id="P56634"/>
    </source>
</evidence>
<evidence type="ECO:0000255" key="4"/>
<evidence type="ECO:0000305" key="5"/>
<reference key="1">
    <citation type="submission" date="1998-06" db="EMBL/GenBank/DDBJ databases">
        <authorList>
            <person name="Da Lage J.-L."/>
        </authorList>
    </citation>
    <scope>NUCLEOTIDE SEQUENCE [GENOMIC DNA]</scope>
</reference>
<protein>
    <recommendedName>
        <fullName>Alpha-amylase-related protein</fullName>
        <ecNumber evidence="3">3.2.1.1</ecNumber>
    </recommendedName>
</protein>
<proteinExistence type="inferred from homology"/>
<gene>
    <name type="primary">Amyrel</name>
</gene>
<accession>O76459</accession>
<organism>
    <name type="scientific">Drosophila serrata</name>
    <name type="common">Fruit fly</name>
    <dbReference type="NCBI Taxonomy" id="7274"/>
    <lineage>
        <taxon>Eukaryota</taxon>
        <taxon>Metazoa</taxon>
        <taxon>Ecdysozoa</taxon>
        <taxon>Arthropoda</taxon>
        <taxon>Hexapoda</taxon>
        <taxon>Insecta</taxon>
        <taxon>Pterygota</taxon>
        <taxon>Neoptera</taxon>
        <taxon>Endopterygota</taxon>
        <taxon>Diptera</taxon>
        <taxon>Brachycera</taxon>
        <taxon>Muscomorpha</taxon>
        <taxon>Ephydroidea</taxon>
        <taxon>Drosophilidae</taxon>
        <taxon>Drosophila</taxon>
        <taxon>Sophophora</taxon>
    </lineage>
</organism>
<sequence>MIKFALALTLCLAGASLSLAQHNPQWWGNRNTIVHLFEWKWSDIAEECETFLAPRGFAGVQVSPVNENIISSGRPWWERYQPISYKLTTRSGNEEEFADMVRRCNDVGIRIYVDVLLNHMSGDFDGVAVGTAGTEAEPSKKSFPGVPYTAQDFHPSCEITDWNDRFQVQECELVGLKDLNQHSDYVRSKLIEFLDHLIELGVAGFRVDAAKHMASEDLEYIYGSLSNLNIDHGFPHNARPFIFQEVIDHGHETVSREEYNELGAVTEFRFSEEIGKAFRGNNALKWLQSWGTDWGFLKSEQALTFVDNHDNQRDQGAVLNYKSPRQYKMATAFHLAYPYGISRVMSSFAFDDHDTPPPQDAQENIISPEFDEDGVCVNGWICEHRWRQIYAMVGFKNAVRDTELHGWWDNGDNQISFCRGNKGFLAVNNNLYDLSQELNTCLPAGEYCDVTSGSLIDGACTGKSVTVNEHGYGYIHIGSDDFDGVLALHVNAKV</sequence>
<name>AMYR_DROSR</name>
<feature type="signal peptide" evidence="1">
    <location>
        <begin position="1"/>
        <end position="20"/>
    </location>
</feature>
<feature type="chain" id="PRO_0000001388" description="Alpha-amylase-related protein">
    <location>
        <begin position="21"/>
        <end position="494"/>
    </location>
</feature>
<feature type="active site" description="Nucleophile" evidence="2">
    <location>
        <position position="208"/>
    </location>
</feature>
<feature type="active site" description="Proton donor" evidence="2">
    <location>
        <position position="245"/>
    </location>
</feature>
<feature type="binding site" evidence="3">
    <location>
        <position position="118"/>
    </location>
    <ligand>
        <name>Ca(2+)</name>
        <dbReference type="ChEBI" id="CHEBI:29108"/>
    </ligand>
</feature>
<feature type="binding site" evidence="2">
    <location>
        <position position="169"/>
    </location>
    <ligand>
        <name>Ca(2+)</name>
        <dbReference type="ChEBI" id="CHEBI:29108"/>
    </ligand>
</feature>
<feature type="binding site" evidence="3">
    <location>
        <position position="178"/>
    </location>
    <ligand>
        <name>Ca(2+)</name>
        <dbReference type="ChEBI" id="CHEBI:29108"/>
    </ligand>
</feature>
<feature type="binding site" evidence="3">
    <location>
        <position position="206"/>
    </location>
    <ligand>
        <name>chloride</name>
        <dbReference type="ChEBI" id="CHEBI:17996"/>
    </ligand>
</feature>
<feature type="binding site" evidence="3">
    <location>
        <position position="212"/>
    </location>
    <ligand>
        <name>Ca(2+)</name>
        <dbReference type="ChEBI" id="CHEBI:29108"/>
    </ligand>
</feature>
<feature type="binding site" evidence="3">
    <location>
        <position position="308"/>
    </location>
    <ligand>
        <name>chloride</name>
        <dbReference type="ChEBI" id="CHEBI:17996"/>
    </ligand>
</feature>
<feature type="binding site" evidence="3">
    <location>
        <position position="343"/>
    </location>
    <ligand>
        <name>chloride</name>
        <dbReference type="ChEBI" id="CHEBI:17996"/>
    </ligand>
</feature>
<feature type="site" description="Transition state stabilizer" evidence="2">
    <location>
        <position position="310"/>
    </location>
</feature>
<feature type="modified residue" description="Pyrrolidone carboxylic acid" evidence="1">
    <location>
        <position position="21"/>
    </location>
</feature>
<feature type="disulfide bond" evidence="3">
    <location>
        <begin position="48"/>
        <end position="104"/>
    </location>
</feature>
<feature type="disulfide bond" evidence="3">
    <location>
        <begin position="157"/>
        <end position="171"/>
    </location>
</feature>
<feature type="disulfide bond" evidence="3">
    <location>
        <begin position="376"/>
        <end position="382"/>
    </location>
</feature>
<feature type="disulfide bond" evidence="4">
    <location>
        <begin position="418"/>
        <end position="441"/>
    </location>
</feature>
<feature type="disulfide bond" evidence="3">
    <location>
        <begin position="448"/>
        <end position="460"/>
    </location>
</feature>
<comment type="catalytic activity">
    <reaction evidence="3">
        <text>Endohydrolysis of (1-&gt;4)-alpha-D-glucosidic linkages in polysaccharides containing three or more (1-&gt;4)-alpha-linked D-glucose units.</text>
        <dbReference type="EC" id="3.2.1.1"/>
    </reaction>
</comment>
<comment type="cofactor">
    <cofactor evidence="3">
        <name>Ca(2+)</name>
        <dbReference type="ChEBI" id="CHEBI:29108"/>
    </cofactor>
    <text evidence="3">Binds 1 Ca(2+) ion per subunit.</text>
</comment>
<comment type="cofactor">
    <cofactor evidence="3">
        <name>chloride</name>
        <dbReference type="ChEBI" id="CHEBI:17996"/>
    </cofactor>
    <text evidence="3">Binds 1 Cl(-) ion per subunit.</text>
</comment>
<comment type="subunit">
    <text evidence="1">Monomer.</text>
</comment>
<comment type="subcellular location">
    <subcellularLocation>
        <location evidence="5">Secreted</location>
    </subcellularLocation>
</comment>
<comment type="similarity">
    <text evidence="5">Belongs to the glycosyl hydrolase 13 family.</text>
</comment>
<dbReference type="EC" id="3.2.1.1" evidence="3"/>
<dbReference type="EMBL" id="AF069756">
    <property type="protein sequence ID" value="AAC39103.1"/>
    <property type="molecule type" value="Genomic_DNA"/>
</dbReference>
<dbReference type="SMR" id="O76459"/>
<dbReference type="CAZy" id="GH13">
    <property type="family name" value="Glycoside Hydrolase Family 13"/>
</dbReference>
<dbReference type="GO" id="GO:0005576">
    <property type="term" value="C:extracellular region"/>
    <property type="evidence" value="ECO:0007669"/>
    <property type="project" value="UniProtKB-SubCell"/>
</dbReference>
<dbReference type="GO" id="GO:0004556">
    <property type="term" value="F:alpha-amylase activity"/>
    <property type="evidence" value="ECO:0007669"/>
    <property type="project" value="UniProtKB-EC"/>
</dbReference>
<dbReference type="GO" id="GO:0046872">
    <property type="term" value="F:metal ion binding"/>
    <property type="evidence" value="ECO:0007669"/>
    <property type="project" value="UniProtKB-KW"/>
</dbReference>
<dbReference type="GO" id="GO:0005975">
    <property type="term" value="P:carbohydrate metabolic process"/>
    <property type="evidence" value="ECO:0007669"/>
    <property type="project" value="InterPro"/>
</dbReference>
<dbReference type="CDD" id="cd11317">
    <property type="entry name" value="AmyAc_bac_euk_AmyA"/>
    <property type="match status" value="1"/>
</dbReference>
<dbReference type="FunFam" id="3.20.20.80:FF:000119">
    <property type="entry name" value="Alpha-amylase-related protein"/>
    <property type="match status" value="1"/>
</dbReference>
<dbReference type="Gene3D" id="3.20.20.80">
    <property type="entry name" value="Glycosidases"/>
    <property type="match status" value="1"/>
</dbReference>
<dbReference type="Gene3D" id="2.60.40.1180">
    <property type="entry name" value="Golgi alpha-mannosidase II"/>
    <property type="match status" value="1"/>
</dbReference>
<dbReference type="InterPro" id="IPR006048">
    <property type="entry name" value="A-amylase/branching_C"/>
</dbReference>
<dbReference type="InterPro" id="IPR031319">
    <property type="entry name" value="A-amylase_C"/>
</dbReference>
<dbReference type="InterPro" id="IPR006046">
    <property type="entry name" value="Alpha_amylase"/>
</dbReference>
<dbReference type="InterPro" id="IPR006047">
    <property type="entry name" value="Glyco_hydro_13_cat_dom"/>
</dbReference>
<dbReference type="InterPro" id="IPR013780">
    <property type="entry name" value="Glyco_hydro_b"/>
</dbReference>
<dbReference type="InterPro" id="IPR017853">
    <property type="entry name" value="Glycoside_hydrolase_SF"/>
</dbReference>
<dbReference type="PANTHER" id="PTHR43447">
    <property type="entry name" value="ALPHA-AMYLASE"/>
    <property type="match status" value="1"/>
</dbReference>
<dbReference type="Pfam" id="PF00128">
    <property type="entry name" value="Alpha-amylase"/>
    <property type="match status" value="1"/>
</dbReference>
<dbReference type="Pfam" id="PF02806">
    <property type="entry name" value="Alpha-amylase_C"/>
    <property type="match status" value="1"/>
</dbReference>
<dbReference type="PRINTS" id="PR00110">
    <property type="entry name" value="ALPHAAMYLASE"/>
</dbReference>
<dbReference type="SMART" id="SM00642">
    <property type="entry name" value="Aamy"/>
    <property type="match status" value="1"/>
</dbReference>
<dbReference type="SMART" id="SM00632">
    <property type="entry name" value="Aamy_C"/>
    <property type="match status" value="1"/>
</dbReference>
<dbReference type="SUPFAM" id="SSF51445">
    <property type="entry name" value="(Trans)glycosidases"/>
    <property type="match status" value="1"/>
</dbReference>
<dbReference type="SUPFAM" id="SSF51011">
    <property type="entry name" value="Glycosyl hydrolase domain"/>
    <property type="match status" value="1"/>
</dbReference>